<gene>
    <name evidence="1" type="primary">rplF</name>
    <name type="ordered locus">lpg0344</name>
</gene>
<comment type="function">
    <text evidence="1">This protein binds to the 23S rRNA, and is important in its secondary structure. It is located near the subunit interface in the base of the L7/L12 stalk, and near the tRNA binding site of the peptidyltransferase center.</text>
</comment>
<comment type="subunit">
    <text evidence="1">Part of the 50S ribosomal subunit.</text>
</comment>
<comment type="similarity">
    <text evidence="1">Belongs to the universal ribosomal protein uL6 family.</text>
</comment>
<evidence type="ECO:0000255" key="1">
    <source>
        <dbReference type="HAMAP-Rule" id="MF_01365"/>
    </source>
</evidence>
<evidence type="ECO:0000305" key="2"/>
<protein>
    <recommendedName>
        <fullName evidence="1">Large ribosomal subunit protein uL6</fullName>
    </recommendedName>
    <alternativeName>
        <fullName evidence="2">50S ribosomal protein L6</fullName>
    </alternativeName>
</protein>
<keyword id="KW-1185">Reference proteome</keyword>
<keyword id="KW-0687">Ribonucleoprotein</keyword>
<keyword id="KW-0689">Ribosomal protein</keyword>
<keyword id="KW-0694">RNA-binding</keyword>
<keyword id="KW-0699">rRNA-binding</keyword>
<feature type="chain" id="PRO_0000265264" description="Large ribosomal subunit protein uL6">
    <location>
        <begin position="1"/>
        <end position="179"/>
    </location>
</feature>
<proteinExistence type="inferred from homology"/>
<accession>Q5ZYM8</accession>
<reference key="1">
    <citation type="journal article" date="2004" name="Science">
        <title>The genomic sequence of the accidental pathogen Legionella pneumophila.</title>
        <authorList>
            <person name="Chien M."/>
            <person name="Morozova I."/>
            <person name="Shi S."/>
            <person name="Sheng H."/>
            <person name="Chen J."/>
            <person name="Gomez S.M."/>
            <person name="Asamani G."/>
            <person name="Hill K."/>
            <person name="Nuara J."/>
            <person name="Feder M."/>
            <person name="Rineer J."/>
            <person name="Greenberg J.J."/>
            <person name="Steshenko V."/>
            <person name="Park S.H."/>
            <person name="Zhao B."/>
            <person name="Teplitskaya E."/>
            <person name="Edwards J.R."/>
            <person name="Pampou S."/>
            <person name="Georghiou A."/>
            <person name="Chou I.-C."/>
            <person name="Iannuccilli W."/>
            <person name="Ulz M.E."/>
            <person name="Kim D.H."/>
            <person name="Geringer-Sameth A."/>
            <person name="Goldsberry C."/>
            <person name="Morozov P."/>
            <person name="Fischer S.G."/>
            <person name="Segal G."/>
            <person name="Qu X."/>
            <person name="Rzhetsky A."/>
            <person name="Zhang P."/>
            <person name="Cayanis E."/>
            <person name="De Jong P.J."/>
            <person name="Ju J."/>
            <person name="Kalachikov S."/>
            <person name="Shuman H.A."/>
            <person name="Russo J.J."/>
        </authorList>
    </citation>
    <scope>NUCLEOTIDE SEQUENCE [LARGE SCALE GENOMIC DNA]</scope>
    <source>
        <strain>Philadelphia 1 / ATCC 33152 / DSM 7513</strain>
    </source>
</reference>
<organism>
    <name type="scientific">Legionella pneumophila subsp. pneumophila (strain Philadelphia 1 / ATCC 33152 / DSM 7513)</name>
    <dbReference type="NCBI Taxonomy" id="272624"/>
    <lineage>
        <taxon>Bacteria</taxon>
        <taxon>Pseudomonadati</taxon>
        <taxon>Pseudomonadota</taxon>
        <taxon>Gammaproteobacteria</taxon>
        <taxon>Legionellales</taxon>
        <taxon>Legionellaceae</taxon>
        <taxon>Legionella</taxon>
    </lineage>
</organism>
<sequence length="179" mass="19432">MSRVAKAPVIHSANVEVTFVDGVITVKGPKGILTQKINKLVNIQHSKESNKLEFSPASNDPMGWAQAGTARALVRNMVQGVTEGYTVTLELVGVGYRAQSKDKSISLSLGYSHSIEYDLPKGVTVETPNNTTILLKGVDKQVLGQIASEIRAFRPPEPYKGKGVKYAGEQIVRKEAKKK</sequence>
<name>RL6_LEGPH</name>
<dbReference type="EMBL" id="AE017354">
    <property type="protein sequence ID" value="AAU26441.1"/>
    <property type="molecule type" value="Genomic_DNA"/>
</dbReference>
<dbReference type="RefSeq" id="WP_010946093.1">
    <property type="nucleotide sequence ID" value="NC_002942.5"/>
</dbReference>
<dbReference type="RefSeq" id="YP_094388.1">
    <property type="nucleotide sequence ID" value="NC_002942.5"/>
</dbReference>
<dbReference type="SMR" id="Q5ZYM8"/>
<dbReference type="STRING" id="272624.lpg0344"/>
<dbReference type="PaxDb" id="272624-lpg0344"/>
<dbReference type="GeneID" id="57034347"/>
<dbReference type="KEGG" id="lpn:lpg0344"/>
<dbReference type="PATRIC" id="fig|272624.6.peg.351"/>
<dbReference type="eggNOG" id="COG0097">
    <property type="taxonomic scope" value="Bacteria"/>
</dbReference>
<dbReference type="HOGENOM" id="CLU_065464_1_2_6"/>
<dbReference type="OrthoDB" id="9805007at2"/>
<dbReference type="Proteomes" id="UP000000609">
    <property type="component" value="Chromosome"/>
</dbReference>
<dbReference type="GO" id="GO:0022625">
    <property type="term" value="C:cytosolic large ribosomal subunit"/>
    <property type="evidence" value="ECO:0007669"/>
    <property type="project" value="TreeGrafter"/>
</dbReference>
<dbReference type="GO" id="GO:0019843">
    <property type="term" value="F:rRNA binding"/>
    <property type="evidence" value="ECO:0007669"/>
    <property type="project" value="UniProtKB-UniRule"/>
</dbReference>
<dbReference type="GO" id="GO:0003735">
    <property type="term" value="F:structural constituent of ribosome"/>
    <property type="evidence" value="ECO:0007669"/>
    <property type="project" value="InterPro"/>
</dbReference>
<dbReference type="GO" id="GO:0002181">
    <property type="term" value="P:cytoplasmic translation"/>
    <property type="evidence" value="ECO:0007669"/>
    <property type="project" value="TreeGrafter"/>
</dbReference>
<dbReference type="FunFam" id="3.90.930.12:FF:000001">
    <property type="entry name" value="50S ribosomal protein L6"/>
    <property type="match status" value="1"/>
</dbReference>
<dbReference type="Gene3D" id="3.90.930.12">
    <property type="entry name" value="Ribosomal protein L6, alpha-beta domain"/>
    <property type="match status" value="2"/>
</dbReference>
<dbReference type="HAMAP" id="MF_01365_B">
    <property type="entry name" value="Ribosomal_uL6_B"/>
    <property type="match status" value="1"/>
</dbReference>
<dbReference type="InterPro" id="IPR000702">
    <property type="entry name" value="Ribosomal_uL6-like"/>
</dbReference>
<dbReference type="InterPro" id="IPR036789">
    <property type="entry name" value="Ribosomal_uL6-like_a/b-dom_sf"/>
</dbReference>
<dbReference type="InterPro" id="IPR020040">
    <property type="entry name" value="Ribosomal_uL6_a/b-dom"/>
</dbReference>
<dbReference type="InterPro" id="IPR019906">
    <property type="entry name" value="Ribosomal_uL6_bac-type"/>
</dbReference>
<dbReference type="InterPro" id="IPR002358">
    <property type="entry name" value="Ribosomal_uL6_CS"/>
</dbReference>
<dbReference type="NCBIfam" id="TIGR03654">
    <property type="entry name" value="L6_bact"/>
    <property type="match status" value="1"/>
</dbReference>
<dbReference type="PANTHER" id="PTHR11655">
    <property type="entry name" value="60S/50S RIBOSOMAL PROTEIN L6/L9"/>
    <property type="match status" value="1"/>
</dbReference>
<dbReference type="PANTHER" id="PTHR11655:SF14">
    <property type="entry name" value="LARGE RIBOSOMAL SUBUNIT PROTEIN UL6M"/>
    <property type="match status" value="1"/>
</dbReference>
<dbReference type="Pfam" id="PF00347">
    <property type="entry name" value="Ribosomal_L6"/>
    <property type="match status" value="2"/>
</dbReference>
<dbReference type="PIRSF" id="PIRSF002162">
    <property type="entry name" value="Ribosomal_L6"/>
    <property type="match status" value="1"/>
</dbReference>
<dbReference type="PRINTS" id="PR00059">
    <property type="entry name" value="RIBOSOMALL6"/>
</dbReference>
<dbReference type="SUPFAM" id="SSF56053">
    <property type="entry name" value="Ribosomal protein L6"/>
    <property type="match status" value="2"/>
</dbReference>
<dbReference type="PROSITE" id="PS00525">
    <property type="entry name" value="RIBOSOMAL_L6_1"/>
    <property type="match status" value="1"/>
</dbReference>